<feature type="chain" id="PRO_1000093514" description="Peptide chain release factor 1">
    <location>
        <begin position="1"/>
        <end position="359"/>
    </location>
</feature>
<feature type="modified residue" description="N5-methylglutamine" evidence="1">
    <location>
        <position position="236"/>
    </location>
</feature>
<organism>
    <name type="scientific">Streptococcus pyogenes serotype M49 (strain NZ131)</name>
    <dbReference type="NCBI Taxonomy" id="471876"/>
    <lineage>
        <taxon>Bacteria</taxon>
        <taxon>Bacillati</taxon>
        <taxon>Bacillota</taxon>
        <taxon>Bacilli</taxon>
        <taxon>Lactobacillales</taxon>
        <taxon>Streptococcaceae</taxon>
        <taxon>Streptococcus</taxon>
    </lineage>
</organism>
<keyword id="KW-0963">Cytoplasm</keyword>
<keyword id="KW-0488">Methylation</keyword>
<keyword id="KW-0648">Protein biosynthesis</keyword>
<gene>
    <name evidence="1" type="primary">prfA</name>
    <name type="ordered locus">Spy49_0894</name>
</gene>
<comment type="function">
    <text evidence="1">Peptide chain release factor 1 directs the termination of translation in response to the peptide chain termination codons UAG and UAA.</text>
</comment>
<comment type="subcellular location">
    <subcellularLocation>
        <location evidence="1">Cytoplasm</location>
    </subcellularLocation>
</comment>
<comment type="PTM">
    <text evidence="1">Methylated by PrmC. Methylation increases the termination efficiency of RF1.</text>
</comment>
<comment type="similarity">
    <text evidence="1">Belongs to the prokaryotic/mitochondrial release factor family.</text>
</comment>
<name>RF1_STRPZ</name>
<accession>B5XLI8</accession>
<dbReference type="EMBL" id="CP000829">
    <property type="protein sequence ID" value="ACI61200.1"/>
    <property type="molecule type" value="Genomic_DNA"/>
</dbReference>
<dbReference type="SMR" id="B5XLI8"/>
<dbReference type="KEGG" id="soz:Spy49_0894"/>
<dbReference type="HOGENOM" id="CLU_036856_0_1_9"/>
<dbReference type="Proteomes" id="UP000001039">
    <property type="component" value="Chromosome"/>
</dbReference>
<dbReference type="GO" id="GO:0005737">
    <property type="term" value="C:cytoplasm"/>
    <property type="evidence" value="ECO:0007669"/>
    <property type="project" value="UniProtKB-SubCell"/>
</dbReference>
<dbReference type="GO" id="GO:0016149">
    <property type="term" value="F:translation release factor activity, codon specific"/>
    <property type="evidence" value="ECO:0007669"/>
    <property type="project" value="UniProtKB-UniRule"/>
</dbReference>
<dbReference type="FunFam" id="3.30.160.20:FF:000027">
    <property type="entry name" value="Peptide chain release factor 1"/>
    <property type="match status" value="1"/>
</dbReference>
<dbReference type="FunFam" id="3.30.70.1660:FF:000002">
    <property type="entry name" value="Peptide chain release factor 1"/>
    <property type="match status" value="1"/>
</dbReference>
<dbReference type="FunFam" id="3.30.70.1660:FF:000004">
    <property type="entry name" value="Peptide chain release factor 1"/>
    <property type="match status" value="1"/>
</dbReference>
<dbReference type="Gene3D" id="3.30.160.20">
    <property type="match status" value="1"/>
</dbReference>
<dbReference type="Gene3D" id="3.30.70.1660">
    <property type="match status" value="1"/>
</dbReference>
<dbReference type="Gene3D" id="6.10.140.1950">
    <property type="match status" value="1"/>
</dbReference>
<dbReference type="HAMAP" id="MF_00093">
    <property type="entry name" value="Rel_fac_1"/>
    <property type="match status" value="1"/>
</dbReference>
<dbReference type="InterPro" id="IPR005139">
    <property type="entry name" value="PCRF"/>
</dbReference>
<dbReference type="InterPro" id="IPR000352">
    <property type="entry name" value="Pep_chain_release_fac_I"/>
</dbReference>
<dbReference type="InterPro" id="IPR045853">
    <property type="entry name" value="Pep_chain_release_fac_I_sf"/>
</dbReference>
<dbReference type="InterPro" id="IPR050057">
    <property type="entry name" value="Prokaryotic/Mito_RF"/>
</dbReference>
<dbReference type="InterPro" id="IPR004373">
    <property type="entry name" value="RF-1"/>
</dbReference>
<dbReference type="NCBIfam" id="TIGR00019">
    <property type="entry name" value="prfA"/>
    <property type="match status" value="1"/>
</dbReference>
<dbReference type="NCBIfam" id="NF001859">
    <property type="entry name" value="PRK00591.1"/>
    <property type="match status" value="1"/>
</dbReference>
<dbReference type="PANTHER" id="PTHR43804">
    <property type="entry name" value="LD18447P"/>
    <property type="match status" value="1"/>
</dbReference>
<dbReference type="PANTHER" id="PTHR43804:SF7">
    <property type="entry name" value="LD18447P"/>
    <property type="match status" value="1"/>
</dbReference>
<dbReference type="Pfam" id="PF03462">
    <property type="entry name" value="PCRF"/>
    <property type="match status" value="1"/>
</dbReference>
<dbReference type="Pfam" id="PF00472">
    <property type="entry name" value="RF-1"/>
    <property type="match status" value="1"/>
</dbReference>
<dbReference type="SMART" id="SM00937">
    <property type="entry name" value="PCRF"/>
    <property type="match status" value="1"/>
</dbReference>
<dbReference type="SUPFAM" id="SSF75620">
    <property type="entry name" value="Release factor"/>
    <property type="match status" value="1"/>
</dbReference>
<dbReference type="PROSITE" id="PS00745">
    <property type="entry name" value="RF_PROK_I"/>
    <property type="match status" value="1"/>
</dbReference>
<evidence type="ECO:0000255" key="1">
    <source>
        <dbReference type="HAMAP-Rule" id="MF_00093"/>
    </source>
</evidence>
<reference key="1">
    <citation type="journal article" date="2008" name="J. Bacteriol.">
        <title>Genome sequence of a nephritogenic and highly transformable M49 strain of Streptococcus pyogenes.</title>
        <authorList>
            <person name="McShan W.M."/>
            <person name="Ferretti J.J."/>
            <person name="Karasawa T."/>
            <person name="Suvorov A.N."/>
            <person name="Lin S."/>
            <person name="Qin B."/>
            <person name="Jia H."/>
            <person name="Kenton S."/>
            <person name="Najar F."/>
            <person name="Wu H."/>
            <person name="Scott J."/>
            <person name="Roe B.A."/>
            <person name="Savic D.J."/>
        </authorList>
    </citation>
    <scope>NUCLEOTIDE SEQUENCE [LARGE SCALE GENOMIC DNA]</scope>
    <source>
        <strain>NZ131</strain>
    </source>
</reference>
<sequence length="359" mass="40569">MNIYDQLQAVEDRYEELGELLSDPDVVSDTKRFMELSREEANTRETVTAYREYKQVIQTISDAEEMIKDASGDPELEEMAKEELKESKAAKEEYEEKLKILLLPKDPNDDKNIILEIRGAAGGDEAALFAGDLLTMYQKYAETQGWRFEVMESSVNGVGGIKEVVAMVSGQSVYSKLKYESGAHRVQRVPVTESQGRVHTSTATVLVMPEVEEVEYDIDPKDLRVDIYHASGAGGQNVNKVATAVRMVHIPTGIKVEMQEERTQQKNRDKAMKIIRARVADHFAQIAQDEQDAERKSTVGTGDRSERIRTYNFPQNRVTDHRIGLTLQKLDTILSGKMDEVIDALVMYDQTKKLESLNN</sequence>
<protein>
    <recommendedName>
        <fullName evidence="1">Peptide chain release factor 1</fullName>
        <shortName evidence="1">RF-1</shortName>
    </recommendedName>
</protein>
<proteinExistence type="inferred from homology"/>